<name>CLPP_HALOH</name>
<organism>
    <name type="scientific">Halothermothrix orenii (strain H 168 / OCM 544 / DSM 9562)</name>
    <dbReference type="NCBI Taxonomy" id="373903"/>
    <lineage>
        <taxon>Bacteria</taxon>
        <taxon>Bacillati</taxon>
        <taxon>Bacillota</taxon>
        <taxon>Clostridia</taxon>
        <taxon>Halanaerobiales</taxon>
        <taxon>Halothermotrichaceae</taxon>
        <taxon>Halothermothrix</taxon>
    </lineage>
</organism>
<accession>B8CY74</accession>
<reference key="1">
    <citation type="journal article" date="2009" name="PLoS ONE">
        <title>Genome analysis of the anaerobic thermohalophilic bacterium Halothermothrix orenii.</title>
        <authorList>
            <person name="Mavromatis K."/>
            <person name="Ivanova N."/>
            <person name="Anderson I."/>
            <person name="Lykidis A."/>
            <person name="Hooper S.D."/>
            <person name="Sun H."/>
            <person name="Kunin V."/>
            <person name="Lapidus A."/>
            <person name="Hugenholtz P."/>
            <person name="Patel B."/>
            <person name="Kyrpides N.C."/>
        </authorList>
    </citation>
    <scope>NUCLEOTIDE SEQUENCE [LARGE SCALE GENOMIC DNA]</scope>
    <source>
        <strain>H 168 / OCM 544 / DSM 9562</strain>
    </source>
</reference>
<evidence type="ECO:0000255" key="1">
    <source>
        <dbReference type="HAMAP-Rule" id="MF_00444"/>
    </source>
</evidence>
<feature type="chain" id="PRO_1000206155" description="ATP-dependent Clp protease proteolytic subunit">
    <location>
        <begin position="1"/>
        <end position="198"/>
    </location>
</feature>
<feature type="active site" description="Nucleophile" evidence="1">
    <location>
        <position position="98"/>
    </location>
</feature>
<feature type="active site" evidence="1">
    <location>
        <position position="123"/>
    </location>
</feature>
<keyword id="KW-0963">Cytoplasm</keyword>
<keyword id="KW-0378">Hydrolase</keyword>
<keyword id="KW-0645">Protease</keyword>
<keyword id="KW-1185">Reference proteome</keyword>
<keyword id="KW-0720">Serine protease</keyword>
<sequence length="198" mass="21980">MSLIPVVVEQTNRGERSYDIYSRLLKDRIVFLGHPINDELSNLIIAQLLFLEAEDPDKDIHLYINSPGGSVTAALAMYDTIQYIKPDVATICMGQAASAGALLLASGTKGKRYALPNARVMIHQPAGGVQGKATEAEIHIKELLRLRERLNEILSKHTGKSVEQISKDVEQDYFMTAEEALEYGIIDEVITKNELKDK</sequence>
<gene>
    <name evidence="1" type="primary">clpP</name>
    <name type="ordered locus">Hore_14940</name>
</gene>
<proteinExistence type="inferred from homology"/>
<comment type="function">
    <text evidence="1">Cleaves peptides in various proteins in a process that requires ATP hydrolysis. Has a chymotrypsin-like activity. Plays a major role in the degradation of misfolded proteins.</text>
</comment>
<comment type="catalytic activity">
    <reaction evidence="1">
        <text>Hydrolysis of proteins to small peptides in the presence of ATP and magnesium. alpha-casein is the usual test substrate. In the absence of ATP, only oligopeptides shorter than five residues are hydrolyzed (such as succinyl-Leu-Tyr-|-NHMec, and Leu-Tyr-Leu-|-Tyr-Trp, in which cleavage of the -Tyr-|-Leu- and -Tyr-|-Trp bonds also occurs).</text>
        <dbReference type="EC" id="3.4.21.92"/>
    </reaction>
</comment>
<comment type="subunit">
    <text evidence="1">Fourteen ClpP subunits assemble into 2 heptameric rings which stack back to back to give a disk-like structure with a central cavity, resembling the structure of eukaryotic proteasomes.</text>
</comment>
<comment type="subcellular location">
    <subcellularLocation>
        <location evidence="1">Cytoplasm</location>
    </subcellularLocation>
</comment>
<comment type="similarity">
    <text evidence="1">Belongs to the peptidase S14 family.</text>
</comment>
<dbReference type="EC" id="3.4.21.92" evidence="1"/>
<dbReference type="EMBL" id="CP001098">
    <property type="protein sequence ID" value="ACL70243.1"/>
    <property type="molecule type" value="Genomic_DNA"/>
</dbReference>
<dbReference type="RefSeq" id="WP_012636426.1">
    <property type="nucleotide sequence ID" value="NC_011899.1"/>
</dbReference>
<dbReference type="SMR" id="B8CY74"/>
<dbReference type="STRING" id="373903.Hore_14940"/>
<dbReference type="MEROPS" id="S14.001"/>
<dbReference type="KEGG" id="hor:Hore_14940"/>
<dbReference type="eggNOG" id="COG0740">
    <property type="taxonomic scope" value="Bacteria"/>
</dbReference>
<dbReference type="HOGENOM" id="CLU_058707_3_2_9"/>
<dbReference type="OrthoDB" id="9802800at2"/>
<dbReference type="Proteomes" id="UP000000719">
    <property type="component" value="Chromosome"/>
</dbReference>
<dbReference type="GO" id="GO:0005737">
    <property type="term" value="C:cytoplasm"/>
    <property type="evidence" value="ECO:0007669"/>
    <property type="project" value="UniProtKB-SubCell"/>
</dbReference>
<dbReference type="GO" id="GO:0009368">
    <property type="term" value="C:endopeptidase Clp complex"/>
    <property type="evidence" value="ECO:0007669"/>
    <property type="project" value="TreeGrafter"/>
</dbReference>
<dbReference type="GO" id="GO:0004176">
    <property type="term" value="F:ATP-dependent peptidase activity"/>
    <property type="evidence" value="ECO:0007669"/>
    <property type="project" value="InterPro"/>
</dbReference>
<dbReference type="GO" id="GO:0051117">
    <property type="term" value="F:ATPase binding"/>
    <property type="evidence" value="ECO:0007669"/>
    <property type="project" value="TreeGrafter"/>
</dbReference>
<dbReference type="GO" id="GO:0004252">
    <property type="term" value="F:serine-type endopeptidase activity"/>
    <property type="evidence" value="ECO:0007669"/>
    <property type="project" value="UniProtKB-UniRule"/>
</dbReference>
<dbReference type="GO" id="GO:0006515">
    <property type="term" value="P:protein quality control for misfolded or incompletely synthesized proteins"/>
    <property type="evidence" value="ECO:0007669"/>
    <property type="project" value="TreeGrafter"/>
</dbReference>
<dbReference type="CDD" id="cd07017">
    <property type="entry name" value="S14_ClpP_2"/>
    <property type="match status" value="1"/>
</dbReference>
<dbReference type="FunFam" id="3.90.226.10:FF:000001">
    <property type="entry name" value="ATP-dependent Clp protease proteolytic subunit"/>
    <property type="match status" value="1"/>
</dbReference>
<dbReference type="Gene3D" id="3.90.226.10">
    <property type="entry name" value="2-enoyl-CoA Hydratase, Chain A, domain 1"/>
    <property type="match status" value="1"/>
</dbReference>
<dbReference type="HAMAP" id="MF_00444">
    <property type="entry name" value="ClpP"/>
    <property type="match status" value="1"/>
</dbReference>
<dbReference type="InterPro" id="IPR001907">
    <property type="entry name" value="ClpP"/>
</dbReference>
<dbReference type="InterPro" id="IPR029045">
    <property type="entry name" value="ClpP/crotonase-like_dom_sf"/>
</dbReference>
<dbReference type="InterPro" id="IPR023562">
    <property type="entry name" value="ClpP/TepA"/>
</dbReference>
<dbReference type="InterPro" id="IPR033135">
    <property type="entry name" value="ClpP_His_AS"/>
</dbReference>
<dbReference type="InterPro" id="IPR018215">
    <property type="entry name" value="ClpP_Ser_AS"/>
</dbReference>
<dbReference type="NCBIfam" id="TIGR00493">
    <property type="entry name" value="clpP"/>
    <property type="match status" value="1"/>
</dbReference>
<dbReference type="NCBIfam" id="NF001368">
    <property type="entry name" value="PRK00277.1"/>
    <property type="match status" value="1"/>
</dbReference>
<dbReference type="NCBIfam" id="NF009205">
    <property type="entry name" value="PRK12553.1"/>
    <property type="match status" value="1"/>
</dbReference>
<dbReference type="PANTHER" id="PTHR10381">
    <property type="entry name" value="ATP-DEPENDENT CLP PROTEASE PROTEOLYTIC SUBUNIT"/>
    <property type="match status" value="1"/>
</dbReference>
<dbReference type="PANTHER" id="PTHR10381:SF70">
    <property type="entry name" value="ATP-DEPENDENT CLP PROTEASE PROTEOLYTIC SUBUNIT"/>
    <property type="match status" value="1"/>
</dbReference>
<dbReference type="Pfam" id="PF00574">
    <property type="entry name" value="CLP_protease"/>
    <property type="match status" value="1"/>
</dbReference>
<dbReference type="PRINTS" id="PR00127">
    <property type="entry name" value="CLPPROTEASEP"/>
</dbReference>
<dbReference type="SUPFAM" id="SSF52096">
    <property type="entry name" value="ClpP/crotonase"/>
    <property type="match status" value="1"/>
</dbReference>
<dbReference type="PROSITE" id="PS00382">
    <property type="entry name" value="CLP_PROTEASE_HIS"/>
    <property type="match status" value="1"/>
</dbReference>
<dbReference type="PROSITE" id="PS00381">
    <property type="entry name" value="CLP_PROTEASE_SER"/>
    <property type="match status" value="1"/>
</dbReference>
<protein>
    <recommendedName>
        <fullName evidence="1">ATP-dependent Clp protease proteolytic subunit</fullName>
        <ecNumber evidence="1">3.4.21.92</ecNumber>
    </recommendedName>
    <alternativeName>
        <fullName evidence="1">Endopeptidase Clp</fullName>
    </alternativeName>
</protein>